<dbReference type="EMBL" id="AK015452">
    <property type="protein sequence ID" value="BAB29852.1"/>
    <property type="molecule type" value="mRNA"/>
</dbReference>
<dbReference type="EMBL" id="AC108439">
    <property type="status" value="NOT_ANNOTATED_CDS"/>
    <property type="molecule type" value="Genomic_DNA"/>
</dbReference>
<dbReference type="EMBL" id="AC112969">
    <property type="status" value="NOT_ANNOTATED_CDS"/>
    <property type="molecule type" value="Genomic_DNA"/>
</dbReference>
<dbReference type="EMBL" id="CH466525">
    <property type="protein sequence ID" value="EDL11564.1"/>
    <property type="molecule type" value="Genomic_DNA"/>
</dbReference>
<dbReference type="EMBL" id="BC058956">
    <property type="protein sequence ID" value="AAH58956.1"/>
    <property type="molecule type" value="mRNA"/>
</dbReference>
<dbReference type="CCDS" id="CCDS40488.1"/>
<dbReference type="RefSeq" id="NP_083717.1">
    <property type="nucleotide sequence ID" value="NM_029441.3"/>
</dbReference>
<dbReference type="BMRB" id="Q9D5D8"/>
<dbReference type="SMR" id="Q9D5D8"/>
<dbReference type="BioGRID" id="217748">
    <property type="interactions" value="1"/>
</dbReference>
<dbReference type="FunCoup" id="Q9D5D8">
    <property type="interactions" value="493"/>
</dbReference>
<dbReference type="STRING" id="10090.ENSMUSP00000104730"/>
<dbReference type="iPTMnet" id="Q9D5D8"/>
<dbReference type="PhosphoSitePlus" id="Q9D5D8"/>
<dbReference type="jPOST" id="Q9D5D8"/>
<dbReference type="PaxDb" id="10090-ENSMUSP00000104730"/>
<dbReference type="ProteomicsDB" id="281359"/>
<dbReference type="Antibodypedia" id="30424">
    <property type="antibodies" value="97 antibodies from 23 providers"/>
</dbReference>
<dbReference type="Ensembl" id="ENSMUST00000109102.4">
    <property type="protein sequence ID" value="ENSMUSP00000104730.3"/>
    <property type="gene ID" value="ENSMUSG00000031758.11"/>
</dbReference>
<dbReference type="GeneID" id="75796"/>
<dbReference type="KEGG" id="mmu:75796"/>
<dbReference type="UCSC" id="uc009noi.2">
    <property type="organism name" value="mouse"/>
</dbReference>
<dbReference type="AGR" id="MGI:1923046"/>
<dbReference type="CTD" id="124359"/>
<dbReference type="MGI" id="MGI:1923046">
    <property type="gene designation" value="Cdyl2"/>
</dbReference>
<dbReference type="VEuPathDB" id="HostDB:ENSMUSG00000031758"/>
<dbReference type="eggNOG" id="KOG0016">
    <property type="taxonomic scope" value="Eukaryota"/>
</dbReference>
<dbReference type="eggNOG" id="KOG1911">
    <property type="taxonomic scope" value="Eukaryota"/>
</dbReference>
<dbReference type="GeneTree" id="ENSGT00940000159646"/>
<dbReference type="HOGENOM" id="CLU_009834_24_0_1"/>
<dbReference type="InParanoid" id="Q9D5D8"/>
<dbReference type="OMA" id="QASTPKF"/>
<dbReference type="OrthoDB" id="6357915at2759"/>
<dbReference type="PhylomeDB" id="Q9D5D8"/>
<dbReference type="TreeFam" id="TF313375"/>
<dbReference type="BioGRID-ORCS" id="75796">
    <property type="hits" value="2 hits in 80 CRISPR screens"/>
</dbReference>
<dbReference type="ChiTaRS" id="Cdyl2">
    <property type="organism name" value="mouse"/>
</dbReference>
<dbReference type="PRO" id="PR:Q9D5D8"/>
<dbReference type="Proteomes" id="UP000000589">
    <property type="component" value="Chromosome 8"/>
</dbReference>
<dbReference type="RNAct" id="Q9D5D8">
    <property type="molecule type" value="protein"/>
</dbReference>
<dbReference type="Bgee" id="ENSMUSG00000031758">
    <property type="expression patterns" value="Expressed in embryonic cell in blastocyst and 90 other cell types or tissues"/>
</dbReference>
<dbReference type="GO" id="GO:0005634">
    <property type="term" value="C:nucleus"/>
    <property type="evidence" value="ECO:0000314"/>
    <property type="project" value="MGI"/>
</dbReference>
<dbReference type="GO" id="GO:0061628">
    <property type="term" value="F:histone H3K27me3 reader activity"/>
    <property type="evidence" value="ECO:0000314"/>
    <property type="project" value="UniProtKB"/>
</dbReference>
<dbReference type="GO" id="GO:0062072">
    <property type="term" value="F:histone H3K9me2/3 reader activity"/>
    <property type="evidence" value="ECO:0000314"/>
    <property type="project" value="UniProtKB"/>
</dbReference>
<dbReference type="GO" id="GO:0035064">
    <property type="term" value="F:methylated histone binding"/>
    <property type="evidence" value="ECO:0000314"/>
    <property type="project" value="MGI"/>
</dbReference>
<dbReference type="CDD" id="cd18634">
    <property type="entry name" value="CD_CDY"/>
    <property type="match status" value="1"/>
</dbReference>
<dbReference type="CDD" id="cd06558">
    <property type="entry name" value="crotonase-like"/>
    <property type="match status" value="1"/>
</dbReference>
<dbReference type="FunFam" id="2.40.50.40:FF:000018">
    <property type="entry name" value="Chromodomain Y like 2"/>
    <property type="match status" value="1"/>
</dbReference>
<dbReference type="FunFam" id="3.90.226.10:FF:000012">
    <property type="entry name" value="Chromodomain Y-like protein 2"/>
    <property type="match status" value="1"/>
</dbReference>
<dbReference type="Gene3D" id="2.40.50.40">
    <property type="match status" value="1"/>
</dbReference>
<dbReference type="Gene3D" id="3.90.226.10">
    <property type="entry name" value="2-enoyl-CoA Hydratase, Chain A, domain 1"/>
    <property type="match status" value="1"/>
</dbReference>
<dbReference type="Gene3D" id="1.10.12.10">
    <property type="entry name" value="Lyase 2-enoyl-coa Hydratase, Chain A, domain 2"/>
    <property type="match status" value="1"/>
</dbReference>
<dbReference type="InterPro" id="IPR016197">
    <property type="entry name" value="Chromo-like_dom_sf"/>
</dbReference>
<dbReference type="InterPro" id="IPR000953">
    <property type="entry name" value="Chromo/chromo_shadow_dom"/>
</dbReference>
<dbReference type="InterPro" id="IPR023780">
    <property type="entry name" value="Chromo_domain"/>
</dbReference>
<dbReference type="InterPro" id="IPR023779">
    <property type="entry name" value="Chromodomain_CS"/>
</dbReference>
<dbReference type="InterPro" id="IPR029045">
    <property type="entry name" value="ClpP/crotonase-like_dom_sf"/>
</dbReference>
<dbReference type="InterPro" id="IPR051053">
    <property type="entry name" value="ECH/Chromodomain_protein"/>
</dbReference>
<dbReference type="InterPro" id="IPR001753">
    <property type="entry name" value="Enoyl-CoA_hydra/iso"/>
</dbReference>
<dbReference type="InterPro" id="IPR014748">
    <property type="entry name" value="Enoyl-CoA_hydra_C"/>
</dbReference>
<dbReference type="PANTHER" id="PTHR43684">
    <property type="match status" value="1"/>
</dbReference>
<dbReference type="PANTHER" id="PTHR43684:SF2">
    <property type="entry name" value="CHROMODOMAIN Y-LIKE PROTEIN 2"/>
    <property type="match status" value="1"/>
</dbReference>
<dbReference type="Pfam" id="PF00385">
    <property type="entry name" value="Chromo"/>
    <property type="match status" value="1"/>
</dbReference>
<dbReference type="Pfam" id="PF00378">
    <property type="entry name" value="ECH_1"/>
    <property type="match status" value="1"/>
</dbReference>
<dbReference type="SMART" id="SM00298">
    <property type="entry name" value="CHROMO"/>
    <property type="match status" value="1"/>
</dbReference>
<dbReference type="SUPFAM" id="SSF54160">
    <property type="entry name" value="Chromo domain-like"/>
    <property type="match status" value="1"/>
</dbReference>
<dbReference type="SUPFAM" id="SSF52096">
    <property type="entry name" value="ClpP/crotonase"/>
    <property type="match status" value="1"/>
</dbReference>
<dbReference type="PROSITE" id="PS00598">
    <property type="entry name" value="CHROMO_1"/>
    <property type="match status" value="1"/>
</dbReference>
<dbReference type="PROSITE" id="PS50013">
    <property type="entry name" value="CHROMO_2"/>
    <property type="match status" value="1"/>
</dbReference>
<protein>
    <recommendedName>
        <fullName>Chromodomain Y-like protein 2</fullName>
        <shortName>CDY-like 2</shortName>
    </recommendedName>
</protein>
<sequence>MASGDLYEVERIVDKRKNKKGKWEYLIRWKGYGSTEDTWEPEHHLLHCEEFIDEFNGLHLSKDKRVKSGKQAGASKLLRDARGLPVERLSHRPLEPGKSKPSSHKRKRVNSPLSRPKKGSSGKAPDRATKTVSYRTTPSGLQIMPLKKAQNGLENGDAGSEKDESHFGNGSHQPDLELNDQLGEQEASDCDGTHSALVENGVGSALTNGGLNLHSPVKRKLETEKDYVFDKRLRYSVRQNESNCRFRDIVVRKEEGFTHILLSSQTSDNNALTPEIMKEVRRALCNAATDDSKLLLLSAVGSVFCSGLDYSYLIGRLSSDRRKESTRIAEAIRDFVKAFIQFKKPIVVAINGPALGLGASILPLCDIVWASEKAWFQTPYATIRLTPAGCSSYTFPQILGVALANEMLFCGRKLTAQEACSRGLVSQVFWPTTFSQEVMLRVKEMASCSAVVLEESKCLVRSFLKSVLEEVNEKECVMLKQLWSSSKGLDSLFSYLQDKIYEV</sequence>
<organism>
    <name type="scientific">Mus musculus</name>
    <name type="common">Mouse</name>
    <dbReference type="NCBI Taxonomy" id="10090"/>
    <lineage>
        <taxon>Eukaryota</taxon>
        <taxon>Metazoa</taxon>
        <taxon>Chordata</taxon>
        <taxon>Craniata</taxon>
        <taxon>Vertebrata</taxon>
        <taxon>Euteleostomi</taxon>
        <taxon>Mammalia</taxon>
        <taxon>Eutheria</taxon>
        <taxon>Euarchontoglires</taxon>
        <taxon>Glires</taxon>
        <taxon>Rodentia</taxon>
        <taxon>Myomorpha</taxon>
        <taxon>Muroidea</taxon>
        <taxon>Muridae</taxon>
        <taxon>Murinae</taxon>
        <taxon>Mus</taxon>
        <taxon>Mus</taxon>
    </lineage>
</organism>
<evidence type="ECO:0000255" key="1">
    <source>
        <dbReference type="PROSITE-ProRule" id="PRU00053"/>
    </source>
</evidence>
<evidence type="ECO:0000256" key="2">
    <source>
        <dbReference type="SAM" id="MobiDB-lite"/>
    </source>
</evidence>
<evidence type="ECO:0000269" key="3">
    <source>
    </source>
</evidence>
<name>CDYL2_MOUSE</name>
<gene>
    <name type="primary">Cdyl2</name>
</gene>
<feature type="chain" id="PRO_0000424594" description="Chromodomain Y-like protein 2">
    <location>
        <begin position="1"/>
        <end position="503"/>
    </location>
</feature>
<feature type="domain" description="Chromo" evidence="1">
    <location>
        <begin position="7"/>
        <end position="67"/>
    </location>
</feature>
<feature type="region of interest" description="Disordered" evidence="2">
    <location>
        <begin position="66"/>
        <end position="177"/>
    </location>
</feature>
<feature type="compositionally biased region" description="Basic and acidic residues" evidence="2">
    <location>
        <begin position="88"/>
        <end position="98"/>
    </location>
</feature>
<feature type="compositionally biased region" description="Basic residues" evidence="2">
    <location>
        <begin position="101"/>
        <end position="120"/>
    </location>
</feature>
<feature type="compositionally biased region" description="Polar residues" evidence="2">
    <location>
        <begin position="130"/>
        <end position="140"/>
    </location>
</feature>
<comment type="subunit">
    <text evidence="3">Interacts (via chromo domain) with histone H3K9me3.</text>
</comment>
<comment type="subcellular location">
    <subcellularLocation>
        <location evidence="3">Nucleus</location>
    </subcellularLocation>
</comment>
<keyword id="KW-0539">Nucleus</keyword>
<keyword id="KW-1185">Reference proteome</keyword>
<proteinExistence type="evidence at protein level"/>
<reference key="1">
    <citation type="journal article" date="2005" name="Science">
        <title>The transcriptional landscape of the mammalian genome.</title>
        <authorList>
            <person name="Carninci P."/>
            <person name="Kasukawa T."/>
            <person name="Katayama S."/>
            <person name="Gough J."/>
            <person name="Frith M.C."/>
            <person name="Maeda N."/>
            <person name="Oyama R."/>
            <person name="Ravasi T."/>
            <person name="Lenhard B."/>
            <person name="Wells C."/>
            <person name="Kodzius R."/>
            <person name="Shimokawa K."/>
            <person name="Bajic V.B."/>
            <person name="Brenner S.E."/>
            <person name="Batalov S."/>
            <person name="Forrest A.R."/>
            <person name="Zavolan M."/>
            <person name="Davis M.J."/>
            <person name="Wilming L.G."/>
            <person name="Aidinis V."/>
            <person name="Allen J.E."/>
            <person name="Ambesi-Impiombato A."/>
            <person name="Apweiler R."/>
            <person name="Aturaliya R.N."/>
            <person name="Bailey T.L."/>
            <person name="Bansal M."/>
            <person name="Baxter L."/>
            <person name="Beisel K.W."/>
            <person name="Bersano T."/>
            <person name="Bono H."/>
            <person name="Chalk A.M."/>
            <person name="Chiu K.P."/>
            <person name="Choudhary V."/>
            <person name="Christoffels A."/>
            <person name="Clutterbuck D.R."/>
            <person name="Crowe M.L."/>
            <person name="Dalla E."/>
            <person name="Dalrymple B.P."/>
            <person name="de Bono B."/>
            <person name="Della Gatta G."/>
            <person name="di Bernardo D."/>
            <person name="Down T."/>
            <person name="Engstrom P."/>
            <person name="Fagiolini M."/>
            <person name="Faulkner G."/>
            <person name="Fletcher C.F."/>
            <person name="Fukushima T."/>
            <person name="Furuno M."/>
            <person name="Futaki S."/>
            <person name="Gariboldi M."/>
            <person name="Georgii-Hemming P."/>
            <person name="Gingeras T.R."/>
            <person name="Gojobori T."/>
            <person name="Green R.E."/>
            <person name="Gustincich S."/>
            <person name="Harbers M."/>
            <person name="Hayashi Y."/>
            <person name="Hensch T.K."/>
            <person name="Hirokawa N."/>
            <person name="Hill D."/>
            <person name="Huminiecki L."/>
            <person name="Iacono M."/>
            <person name="Ikeo K."/>
            <person name="Iwama A."/>
            <person name="Ishikawa T."/>
            <person name="Jakt M."/>
            <person name="Kanapin A."/>
            <person name="Katoh M."/>
            <person name="Kawasawa Y."/>
            <person name="Kelso J."/>
            <person name="Kitamura H."/>
            <person name="Kitano H."/>
            <person name="Kollias G."/>
            <person name="Krishnan S.P."/>
            <person name="Kruger A."/>
            <person name="Kummerfeld S.K."/>
            <person name="Kurochkin I.V."/>
            <person name="Lareau L.F."/>
            <person name="Lazarevic D."/>
            <person name="Lipovich L."/>
            <person name="Liu J."/>
            <person name="Liuni S."/>
            <person name="McWilliam S."/>
            <person name="Madan Babu M."/>
            <person name="Madera M."/>
            <person name="Marchionni L."/>
            <person name="Matsuda H."/>
            <person name="Matsuzawa S."/>
            <person name="Miki H."/>
            <person name="Mignone F."/>
            <person name="Miyake S."/>
            <person name="Morris K."/>
            <person name="Mottagui-Tabar S."/>
            <person name="Mulder N."/>
            <person name="Nakano N."/>
            <person name="Nakauchi H."/>
            <person name="Ng P."/>
            <person name="Nilsson R."/>
            <person name="Nishiguchi S."/>
            <person name="Nishikawa S."/>
            <person name="Nori F."/>
            <person name="Ohara O."/>
            <person name="Okazaki Y."/>
            <person name="Orlando V."/>
            <person name="Pang K.C."/>
            <person name="Pavan W.J."/>
            <person name="Pavesi G."/>
            <person name="Pesole G."/>
            <person name="Petrovsky N."/>
            <person name="Piazza S."/>
            <person name="Reed J."/>
            <person name="Reid J.F."/>
            <person name="Ring B.Z."/>
            <person name="Ringwald M."/>
            <person name="Rost B."/>
            <person name="Ruan Y."/>
            <person name="Salzberg S.L."/>
            <person name="Sandelin A."/>
            <person name="Schneider C."/>
            <person name="Schoenbach C."/>
            <person name="Sekiguchi K."/>
            <person name="Semple C.A."/>
            <person name="Seno S."/>
            <person name="Sessa L."/>
            <person name="Sheng Y."/>
            <person name="Shibata Y."/>
            <person name="Shimada H."/>
            <person name="Shimada K."/>
            <person name="Silva D."/>
            <person name="Sinclair B."/>
            <person name="Sperling S."/>
            <person name="Stupka E."/>
            <person name="Sugiura K."/>
            <person name="Sultana R."/>
            <person name="Takenaka Y."/>
            <person name="Taki K."/>
            <person name="Tammoja K."/>
            <person name="Tan S.L."/>
            <person name="Tang S."/>
            <person name="Taylor M.S."/>
            <person name="Tegner J."/>
            <person name="Teichmann S.A."/>
            <person name="Ueda H.R."/>
            <person name="van Nimwegen E."/>
            <person name="Verardo R."/>
            <person name="Wei C.L."/>
            <person name="Yagi K."/>
            <person name="Yamanishi H."/>
            <person name="Zabarovsky E."/>
            <person name="Zhu S."/>
            <person name="Zimmer A."/>
            <person name="Hide W."/>
            <person name="Bult C."/>
            <person name="Grimmond S.M."/>
            <person name="Teasdale R.D."/>
            <person name="Liu E.T."/>
            <person name="Brusic V."/>
            <person name="Quackenbush J."/>
            <person name="Wahlestedt C."/>
            <person name="Mattick J.S."/>
            <person name="Hume D.A."/>
            <person name="Kai C."/>
            <person name="Sasaki D."/>
            <person name="Tomaru Y."/>
            <person name="Fukuda S."/>
            <person name="Kanamori-Katayama M."/>
            <person name="Suzuki M."/>
            <person name="Aoki J."/>
            <person name="Arakawa T."/>
            <person name="Iida J."/>
            <person name="Imamura K."/>
            <person name="Itoh M."/>
            <person name="Kato T."/>
            <person name="Kawaji H."/>
            <person name="Kawagashira N."/>
            <person name="Kawashima T."/>
            <person name="Kojima M."/>
            <person name="Kondo S."/>
            <person name="Konno H."/>
            <person name="Nakano K."/>
            <person name="Ninomiya N."/>
            <person name="Nishio T."/>
            <person name="Okada M."/>
            <person name="Plessy C."/>
            <person name="Shibata K."/>
            <person name="Shiraki T."/>
            <person name="Suzuki S."/>
            <person name="Tagami M."/>
            <person name="Waki K."/>
            <person name="Watahiki A."/>
            <person name="Okamura-Oho Y."/>
            <person name="Suzuki H."/>
            <person name="Kawai J."/>
            <person name="Hayashizaki Y."/>
        </authorList>
    </citation>
    <scope>NUCLEOTIDE SEQUENCE [LARGE SCALE MRNA]</scope>
</reference>
<reference key="2">
    <citation type="journal article" date="2009" name="PLoS Biol.">
        <title>Lineage-specific biology revealed by a finished genome assembly of the mouse.</title>
        <authorList>
            <person name="Church D.M."/>
            <person name="Goodstadt L."/>
            <person name="Hillier L.W."/>
            <person name="Zody M.C."/>
            <person name="Goldstein S."/>
            <person name="She X."/>
            <person name="Bult C.J."/>
            <person name="Agarwala R."/>
            <person name="Cherry J.L."/>
            <person name="DiCuccio M."/>
            <person name="Hlavina W."/>
            <person name="Kapustin Y."/>
            <person name="Meric P."/>
            <person name="Maglott D."/>
            <person name="Birtle Z."/>
            <person name="Marques A.C."/>
            <person name="Graves T."/>
            <person name="Zhou S."/>
            <person name="Teague B."/>
            <person name="Potamousis K."/>
            <person name="Churas C."/>
            <person name="Place M."/>
            <person name="Herschleb J."/>
            <person name="Runnheim R."/>
            <person name="Forrest D."/>
            <person name="Amos-Landgraf J."/>
            <person name="Schwartz D.C."/>
            <person name="Cheng Z."/>
            <person name="Lindblad-Toh K."/>
            <person name="Eichler E.E."/>
            <person name="Ponting C.P."/>
        </authorList>
    </citation>
    <scope>NUCLEOTIDE SEQUENCE [LARGE SCALE GENOMIC DNA]</scope>
    <source>
        <strain>C57BL/6J</strain>
    </source>
</reference>
<reference key="3">
    <citation type="submission" date="2005-07" db="EMBL/GenBank/DDBJ databases">
        <authorList>
            <person name="Mural R.J."/>
            <person name="Adams M.D."/>
            <person name="Myers E.W."/>
            <person name="Smith H.O."/>
            <person name="Venter J.C."/>
        </authorList>
    </citation>
    <scope>NUCLEOTIDE SEQUENCE [LARGE SCALE GENOMIC DNA]</scope>
</reference>
<reference key="4">
    <citation type="journal article" date="2004" name="Genome Res.">
        <title>The status, quality, and expansion of the NIH full-length cDNA project: the Mammalian Gene Collection (MGC).</title>
        <authorList>
            <consortium name="The MGC Project Team"/>
        </authorList>
    </citation>
    <scope>NUCLEOTIDE SEQUENCE [LARGE SCALE MRNA]</scope>
</reference>
<reference key="5">
    <citation type="journal article" date="2008" name="J. Biol. Chem.">
        <title>Specificity of the chromodomain Y chromosome family of chromodomains for lysine-methylated ARK(S/T) motifs.</title>
        <authorList>
            <person name="Fischle W."/>
            <person name="Franz H."/>
            <person name="Jacobs S.A."/>
            <person name="Allis C.D."/>
            <person name="Khorasanizadeh S."/>
        </authorList>
    </citation>
    <scope>INTERACTION WITH HISTONE H3K9ME3</scope>
    <scope>SUBCELLULAR LOCATION</scope>
</reference>
<accession>Q9D5D8</accession>